<feature type="chain" id="PRO_0000177875" description="D-alanine--D-alanine ligase">
    <location>
        <begin position="1"/>
        <end position="356"/>
    </location>
</feature>
<feature type="domain" description="ATP-grasp" evidence="2">
    <location>
        <begin position="134"/>
        <end position="339"/>
    </location>
</feature>
<feature type="binding site" evidence="2">
    <location>
        <begin position="167"/>
        <end position="222"/>
    </location>
    <ligand>
        <name>ATP</name>
        <dbReference type="ChEBI" id="CHEBI:30616"/>
    </ligand>
</feature>
<feature type="binding site" evidence="2">
    <location>
        <position position="293"/>
    </location>
    <ligand>
        <name>Mg(2+)</name>
        <dbReference type="ChEBI" id="CHEBI:18420"/>
        <label>1</label>
    </ligand>
</feature>
<feature type="binding site" evidence="2">
    <location>
        <position position="306"/>
    </location>
    <ligand>
        <name>Mg(2+)</name>
        <dbReference type="ChEBI" id="CHEBI:18420"/>
        <label>1</label>
    </ligand>
</feature>
<feature type="binding site" evidence="2">
    <location>
        <position position="306"/>
    </location>
    <ligand>
        <name>Mg(2+)</name>
        <dbReference type="ChEBI" id="CHEBI:18420"/>
        <label>2</label>
    </ligand>
</feature>
<feature type="binding site" evidence="2">
    <location>
        <position position="308"/>
    </location>
    <ligand>
        <name>Mg(2+)</name>
        <dbReference type="ChEBI" id="CHEBI:18420"/>
        <label>2</label>
    </ligand>
</feature>
<proteinExistence type="inferred from homology"/>
<dbReference type="EC" id="6.3.2.4" evidence="2"/>
<dbReference type="EMBL" id="BA000017">
    <property type="protein sequence ID" value="BAB58245.1"/>
    <property type="molecule type" value="Genomic_DNA"/>
</dbReference>
<dbReference type="RefSeq" id="WP_000159631.1">
    <property type="nucleotide sequence ID" value="NC_002758.2"/>
</dbReference>
<dbReference type="SMR" id="P63891"/>
<dbReference type="KEGG" id="sav:SAV2083"/>
<dbReference type="HOGENOM" id="CLU_039268_0_0_9"/>
<dbReference type="PhylomeDB" id="P63891"/>
<dbReference type="UniPathway" id="UPA00219"/>
<dbReference type="Proteomes" id="UP000002481">
    <property type="component" value="Chromosome"/>
</dbReference>
<dbReference type="GO" id="GO:0005829">
    <property type="term" value="C:cytosol"/>
    <property type="evidence" value="ECO:0007669"/>
    <property type="project" value="TreeGrafter"/>
</dbReference>
<dbReference type="GO" id="GO:0005524">
    <property type="term" value="F:ATP binding"/>
    <property type="evidence" value="ECO:0007669"/>
    <property type="project" value="UniProtKB-KW"/>
</dbReference>
<dbReference type="GO" id="GO:0008716">
    <property type="term" value="F:D-alanine-D-alanine ligase activity"/>
    <property type="evidence" value="ECO:0007669"/>
    <property type="project" value="UniProtKB-UniRule"/>
</dbReference>
<dbReference type="GO" id="GO:0046872">
    <property type="term" value="F:metal ion binding"/>
    <property type="evidence" value="ECO:0007669"/>
    <property type="project" value="UniProtKB-KW"/>
</dbReference>
<dbReference type="GO" id="GO:0071555">
    <property type="term" value="P:cell wall organization"/>
    <property type="evidence" value="ECO:0007669"/>
    <property type="project" value="UniProtKB-KW"/>
</dbReference>
<dbReference type="GO" id="GO:0009252">
    <property type="term" value="P:peptidoglycan biosynthetic process"/>
    <property type="evidence" value="ECO:0007669"/>
    <property type="project" value="UniProtKB-UniRule"/>
</dbReference>
<dbReference type="GO" id="GO:0008360">
    <property type="term" value="P:regulation of cell shape"/>
    <property type="evidence" value="ECO:0007669"/>
    <property type="project" value="UniProtKB-KW"/>
</dbReference>
<dbReference type="FunFam" id="3.30.1490.20:FF:000007">
    <property type="entry name" value="D-alanine--D-alanine ligase"/>
    <property type="match status" value="1"/>
</dbReference>
<dbReference type="FunFam" id="3.30.470.20:FF:000008">
    <property type="entry name" value="D-alanine--D-alanine ligase"/>
    <property type="match status" value="1"/>
</dbReference>
<dbReference type="FunFam" id="3.40.50.20:FF:000020">
    <property type="entry name" value="D-alanine--D-alanine ligase"/>
    <property type="match status" value="1"/>
</dbReference>
<dbReference type="Gene3D" id="3.40.50.20">
    <property type="match status" value="1"/>
</dbReference>
<dbReference type="Gene3D" id="3.30.1490.20">
    <property type="entry name" value="ATP-grasp fold, A domain"/>
    <property type="match status" value="1"/>
</dbReference>
<dbReference type="Gene3D" id="3.30.470.20">
    <property type="entry name" value="ATP-grasp fold, B domain"/>
    <property type="match status" value="1"/>
</dbReference>
<dbReference type="HAMAP" id="MF_00047">
    <property type="entry name" value="Dala_Dala_lig"/>
    <property type="match status" value="1"/>
</dbReference>
<dbReference type="InterPro" id="IPR011761">
    <property type="entry name" value="ATP-grasp"/>
</dbReference>
<dbReference type="InterPro" id="IPR013815">
    <property type="entry name" value="ATP_grasp_subdomain_1"/>
</dbReference>
<dbReference type="InterPro" id="IPR000291">
    <property type="entry name" value="D-Ala_lig_Van_CS"/>
</dbReference>
<dbReference type="InterPro" id="IPR005905">
    <property type="entry name" value="D_ala_D_ala"/>
</dbReference>
<dbReference type="InterPro" id="IPR011095">
    <property type="entry name" value="Dala_Dala_lig_C"/>
</dbReference>
<dbReference type="InterPro" id="IPR011127">
    <property type="entry name" value="Dala_Dala_lig_N"/>
</dbReference>
<dbReference type="InterPro" id="IPR016185">
    <property type="entry name" value="PreATP-grasp_dom_sf"/>
</dbReference>
<dbReference type="NCBIfam" id="TIGR01205">
    <property type="entry name" value="D_ala_D_alaTIGR"/>
    <property type="match status" value="1"/>
</dbReference>
<dbReference type="NCBIfam" id="NF002526">
    <property type="entry name" value="PRK01966.1-2"/>
    <property type="match status" value="1"/>
</dbReference>
<dbReference type="NCBIfam" id="NF002528">
    <property type="entry name" value="PRK01966.1-4"/>
    <property type="match status" value="1"/>
</dbReference>
<dbReference type="PANTHER" id="PTHR23132">
    <property type="entry name" value="D-ALANINE--D-ALANINE LIGASE"/>
    <property type="match status" value="1"/>
</dbReference>
<dbReference type="PANTHER" id="PTHR23132:SF25">
    <property type="entry name" value="D-ALANINE--D-ALANINE LIGASE A"/>
    <property type="match status" value="1"/>
</dbReference>
<dbReference type="Pfam" id="PF07478">
    <property type="entry name" value="Dala_Dala_lig_C"/>
    <property type="match status" value="1"/>
</dbReference>
<dbReference type="Pfam" id="PF01820">
    <property type="entry name" value="Dala_Dala_lig_N"/>
    <property type="match status" value="1"/>
</dbReference>
<dbReference type="PIRSF" id="PIRSF039102">
    <property type="entry name" value="Ddl/VanB"/>
    <property type="match status" value="1"/>
</dbReference>
<dbReference type="SUPFAM" id="SSF56059">
    <property type="entry name" value="Glutathione synthetase ATP-binding domain-like"/>
    <property type="match status" value="1"/>
</dbReference>
<dbReference type="SUPFAM" id="SSF52440">
    <property type="entry name" value="PreATP-grasp domain"/>
    <property type="match status" value="1"/>
</dbReference>
<dbReference type="PROSITE" id="PS50975">
    <property type="entry name" value="ATP_GRASP"/>
    <property type="match status" value="1"/>
</dbReference>
<dbReference type="PROSITE" id="PS00843">
    <property type="entry name" value="DALA_DALA_LIGASE_1"/>
    <property type="match status" value="1"/>
</dbReference>
<dbReference type="PROSITE" id="PS00844">
    <property type="entry name" value="DALA_DALA_LIGASE_2"/>
    <property type="match status" value="1"/>
</dbReference>
<sequence length="356" mass="40231">MTKENICIVFGGKSAEHEVSILTAQNVLNAIDKDKYHVDIIYITNDGDWRKQNNITAEIKSTDELHLENGEALEISQLLKESSSGQPYDAVFPLLHGPNGEDGTIQGLFEVLDVPYVGNGVLSAASSMDKLVMKQLFEHRGLPQLPYISFLRSEYEKYEHNILKLVNDKLNYPVFVKPANLGSSVGISKCNNEAELKEGIKEAFQFDRKLVIEQGVNAREIEVAVLGNDYPEATWPGEVVKDVAFYDYKSKYKDGKVQLQIPADLDEDVQLTLRNMALEAFKATDCSGLVRADFFVTEDNQIYINETNAMPGFTAFSMYPKLWENMGLSYPELITKLIELAKERHQDKQKNKYKID</sequence>
<accession>P63891</accession>
<accession>Q99SH4</accession>
<reference key="1">
    <citation type="journal article" date="2001" name="Lancet">
        <title>Whole genome sequencing of meticillin-resistant Staphylococcus aureus.</title>
        <authorList>
            <person name="Kuroda M."/>
            <person name="Ohta T."/>
            <person name="Uchiyama I."/>
            <person name="Baba T."/>
            <person name="Yuzawa H."/>
            <person name="Kobayashi I."/>
            <person name="Cui L."/>
            <person name="Oguchi A."/>
            <person name="Aoki K."/>
            <person name="Nagai Y."/>
            <person name="Lian J.-Q."/>
            <person name="Ito T."/>
            <person name="Kanamori M."/>
            <person name="Matsumaru H."/>
            <person name="Maruyama A."/>
            <person name="Murakami H."/>
            <person name="Hosoyama A."/>
            <person name="Mizutani-Ui Y."/>
            <person name="Takahashi N.K."/>
            <person name="Sawano T."/>
            <person name="Inoue R."/>
            <person name="Kaito C."/>
            <person name="Sekimizu K."/>
            <person name="Hirakawa H."/>
            <person name="Kuhara S."/>
            <person name="Goto S."/>
            <person name="Yabuzaki J."/>
            <person name="Kanehisa M."/>
            <person name="Yamashita A."/>
            <person name="Oshima K."/>
            <person name="Furuya K."/>
            <person name="Yoshino C."/>
            <person name="Shiba T."/>
            <person name="Hattori M."/>
            <person name="Ogasawara N."/>
            <person name="Hayashi H."/>
            <person name="Hiramatsu K."/>
        </authorList>
    </citation>
    <scope>NUCLEOTIDE SEQUENCE [LARGE SCALE GENOMIC DNA]</scope>
    <source>
        <strain>Mu50 / ATCC 700699</strain>
    </source>
</reference>
<organism>
    <name type="scientific">Staphylococcus aureus (strain Mu50 / ATCC 700699)</name>
    <dbReference type="NCBI Taxonomy" id="158878"/>
    <lineage>
        <taxon>Bacteria</taxon>
        <taxon>Bacillati</taxon>
        <taxon>Bacillota</taxon>
        <taxon>Bacilli</taxon>
        <taxon>Bacillales</taxon>
        <taxon>Staphylococcaceae</taxon>
        <taxon>Staphylococcus</taxon>
    </lineage>
</organism>
<keyword id="KW-0067">ATP-binding</keyword>
<keyword id="KW-0133">Cell shape</keyword>
<keyword id="KW-0961">Cell wall biogenesis/degradation</keyword>
<keyword id="KW-0963">Cytoplasm</keyword>
<keyword id="KW-0436">Ligase</keyword>
<keyword id="KW-0460">Magnesium</keyword>
<keyword id="KW-0464">Manganese</keyword>
<keyword id="KW-0479">Metal-binding</keyword>
<keyword id="KW-0547">Nucleotide-binding</keyword>
<keyword id="KW-0573">Peptidoglycan synthesis</keyword>
<gene>
    <name evidence="2" type="primary">ddl</name>
    <name type="synonym">ddlA</name>
    <name type="ordered locus">SAV2083</name>
</gene>
<name>DDL_STAAM</name>
<protein>
    <recommendedName>
        <fullName evidence="2">D-alanine--D-alanine ligase</fullName>
        <ecNumber evidence="2">6.3.2.4</ecNumber>
    </recommendedName>
    <alternativeName>
        <fullName evidence="2">D-Ala-D-Ala ligase</fullName>
    </alternativeName>
    <alternativeName>
        <fullName evidence="2">D-alanylalanine synthetase</fullName>
    </alternativeName>
</protein>
<evidence type="ECO:0000250" key="1"/>
<evidence type="ECO:0000255" key="2">
    <source>
        <dbReference type="HAMAP-Rule" id="MF_00047"/>
    </source>
</evidence>
<comment type="function">
    <text evidence="2">Cell wall formation.</text>
</comment>
<comment type="catalytic activity">
    <reaction evidence="2">
        <text>2 D-alanine + ATP = D-alanyl-D-alanine + ADP + phosphate + H(+)</text>
        <dbReference type="Rhea" id="RHEA:11224"/>
        <dbReference type="ChEBI" id="CHEBI:15378"/>
        <dbReference type="ChEBI" id="CHEBI:30616"/>
        <dbReference type="ChEBI" id="CHEBI:43474"/>
        <dbReference type="ChEBI" id="CHEBI:57416"/>
        <dbReference type="ChEBI" id="CHEBI:57822"/>
        <dbReference type="ChEBI" id="CHEBI:456216"/>
        <dbReference type="EC" id="6.3.2.4"/>
    </reaction>
</comment>
<comment type="cofactor">
    <cofactor evidence="1">
        <name>Mg(2+)</name>
        <dbReference type="ChEBI" id="CHEBI:18420"/>
    </cofactor>
    <cofactor evidence="1">
        <name>Mn(2+)</name>
        <dbReference type="ChEBI" id="CHEBI:29035"/>
    </cofactor>
    <text evidence="1">Binds 2 magnesium or manganese ions per subunit.</text>
</comment>
<comment type="pathway">
    <text evidence="2">Cell wall biogenesis; peptidoglycan biosynthesis.</text>
</comment>
<comment type="subcellular location">
    <subcellularLocation>
        <location evidence="2">Cytoplasm</location>
    </subcellularLocation>
</comment>
<comment type="similarity">
    <text evidence="2">Belongs to the D-alanine--D-alanine ligase family.</text>
</comment>